<proteinExistence type="evidence at protein level"/>
<reference key="1">
    <citation type="journal article" date="2005" name="J. Bacteriol.">
        <title>The genome of Sulfolobus acidocaldarius, a model organism of the Crenarchaeota.</title>
        <authorList>
            <person name="Chen L."/>
            <person name="Bruegger K."/>
            <person name="Skovgaard M."/>
            <person name="Redder P."/>
            <person name="She Q."/>
            <person name="Torarinsson E."/>
            <person name="Greve B."/>
            <person name="Awayez M."/>
            <person name="Zibat A."/>
            <person name="Klenk H.-P."/>
            <person name="Garrett R.A."/>
        </authorList>
    </citation>
    <scope>NUCLEOTIDE SEQUENCE [LARGE SCALE GENOMIC DNA]</scope>
    <source>
        <strain>ATCC 33909 / DSM 639 / JCM 8929 / NBRC 15157 / NCIMB 11770</strain>
    </source>
</reference>
<sequence>MGHRKLSSPRRGSAGLRPRKRADEILPTPKNWPLVNLKEPKLLGFIGYKAGMTHVYMIDDKPTSPNYGKEVYTPVTIVESPPILGLALRAYHIDSKGELSVLVDYWANFEEGSLKYLKRKITSLKVDSSKMKEKLDLIQKNLNNITYMRLLVSTQPWLVPSLGKKRPEIVEIQIGGGSIQDQLNYGLSLLGKQIPVRDVFREGQLTDIIGVTKGKGFQGVIKRYSVVEFPRWHKHRKGSRKIGARGPSISTPSYVPQPGQLGFHRRTEYNKRIIKIGDNVNEINPAGGIVNYGLVKNTYLVIEGSVLGSRKRPLFLRYPIRPSWSPESAPKITYVNLASQQG</sequence>
<name>RL3_SULAC</name>
<feature type="chain" id="PRO_0000077221" description="Large ribosomal subunit protein uL3">
    <location>
        <begin position="1"/>
        <end position="342"/>
    </location>
</feature>
<feature type="region of interest" description="Disordered" evidence="2">
    <location>
        <begin position="1"/>
        <end position="22"/>
    </location>
</feature>
<accession>Q4JB40</accession>
<organism>
    <name type="scientific">Sulfolobus acidocaldarius (strain ATCC 33909 / DSM 639 / JCM 8929 / NBRC 15157 / NCIMB 11770)</name>
    <dbReference type="NCBI Taxonomy" id="330779"/>
    <lineage>
        <taxon>Archaea</taxon>
        <taxon>Thermoproteota</taxon>
        <taxon>Thermoprotei</taxon>
        <taxon>Sulfolobales</taxon>
        <taxon>Sulfolobaceae</taxon>
        <taxon>Sulfolobus</taxon>
    </lineage>
</organism>
<keyword id="KW-0002">3D-structure</keyword>
<keyword id="KW-1185">Reference proteome</keyword>
<keyword id="KW-0687">Ribonucleoprotein</keyword>
<keyword id="KW-0689">Ribosomal protein</keyword>
<keyword id="KW-0694">RNA-binding</keyword>
<keyword id="KW-0699">rRNA-binding</keyword>
<gene>
    <name evidence="1" type="primary">rpl3</name>
    <name type="ordered locus">Saci_0597</name>
</gene>
<comment type="function">
    <text evidence="1">One of the primary rRNA binding proteins, it binds directly near the 3'-end of the 23S rRNA, where it nucleates assembly of the 50S subunit.</text>
</comment>
<comment type="subunit">
    <text evidence="1">Part of the 50S ribosomal subunit. Forms a cluster with proteins L14 and L24e.</text>
</comment>
<comment type="similarity">
    <text evidence="1">Belongs to the universal ribosomal protein uL3 family.</text>
</comment>
<protein>
    <recommendedName>
        <fullName evidence="1">Large ribosomal subunit protein uL3</fullName>
    </recommendedName>
    <alternativeName>
        <fullName evidence="3">50S ribosomal protein L3</fullName>
    </alternativeName>
</protein>
<dbReference type="EMBL" id="CP000077">
    <property type="protein sequence ID" value="AAY79989.1"/>
    <property type="molecule type" value="Genomic_DNA"/>
</dbReference>
<dbReference type="RefSeq" id="WP_011277491.1">
    <property type="nucleotide sequence ID" value="NC_007181.1"/>
</dbReference>
<dbReference type="PDB" id="8HKU">
    <property type="method" value="EM"/>
    <property type="resolution" value="2.72 A"/>
    <property type="chains" value="AL3P=4-342"/>
</dbReference>
<dbReference type="PDB" id="8HKV">
    <property type="method" value="EM"/>
    <property type="resolution" value="4.94 A"/>
    <property type="chains" value="AL3P=4-342"/>
</dbReference>
<dbReference type="PDB" id="8HKY">
    <property type="method" value="EM"/>
    <property type="resolution" value="4.45 A"/>
    <property type="chains" value="AL3P=4-342"/>
</dbReference>
<dbReference type="PDB" id="8HKZ">
    <property type="method" value="EM"/>
    <property type="resolution" value="4.78 A"/>
    <property type="chains" value="AL3P=4-342"/>
</dbReference>
<dbReference type="PDB" id="8HL1">
    <property type="method" value="EM"/>
    <property type="resolution" value="3.93 A"/>
    <property type="chains" value="AL3P=4-342"/>
</dbReference>
<dbReference type="PDB" id="8HL2">
    <property type="method" value="EM"/>
    <property type="resolution" value="4.10 A"/>
    <property type="chains" value="AL3P=4-342"/>
</dbReference>
<dbReference type="PDB" id="8HL3">
    <property type="method" value="EM"/>
    <property type="resolution" value="4.80 A"/>
    <property type="chains" value="AL3P=4-342"/>
</dbReference>
<dbReference type="PDB" id="8HL4">
    <property type="method" value="EM"/>
    <property type="resolution" value="4.62 A"/>
    <property type="chains" value="AL3P=4-342"/>
</dbReference>
<dbReference type="PDB" id="8HL5">
    <property type="method" value="EM"/>
    <property type="resolution" value="5.72 A"/>
    <property type="chains" value="AL3P=4-342"/>
</dbReference>
<dbReference type="PDBsum" id="8HKU"/>
<dbReference type="PDBsum" id="8HKV"/>
<dbReference type="PDBsum" id="8HKY"/>
<dbReference type="PDBsum" id="8HKZ"/>
<dbReference type="PDBsum" id="8HL1"/>
<dbReference type="PDBsum" id="8HL2"/>
<dbReference type="PDBsum" id="8HL3"/>
<dbReference type="PDBsum" id="8HL4"/>
<dbReference type="PDBsum" id="8HL5"/>
<dbReference type="EMDB" id="EMD-34860"/>
<dbReference type="EMDB" id="EMD-34861"/>
<dbReference type="EMDB" id="EMD-34863"/>
<dbReference type="EMDB" id="EMD-34864"/>
<dbReference type="EMDB" id="EMD-34866"/>
<dbReference type="EMDB" id="EMD-34867"/>
<dbReference type="EMDB" id="EMD-34868"/>
<dbReference type="EMDB" id="EMD-34869"/>
<dbReference type="EMDB" id="EMD-34870"/>
<dbReference type="SMR" id="Q4JB40"/>
<dbReference type="STRING" id="330779.Saci_0597"/>
<dbReference type="GeneID" id="14551118"/>
<dbReference type="KEGG" id="sai:Saci_0597"/>
<dbReference type="PATRIC" id="fig|330779.12.peg.576"/>
<dbReference type="eggNOG" id="arCOG04070">
    <property type="taxonomic scope" value="Archaea"/>
</dbReference>
<dbReference type="HOGENOM" id="CLU_033361_2_0_2"/>
<dbReference type="Proteomes" id="UP000001018">
    <property type="component" value="Chromosome"/>
</dbReference>
<dbReference type="GO" id="GO:0022625">
    <property type="term" value="C:cytosolic large ribosomal subunit"/>
    <property type="evidence" value="ECO:0007669"/>
    <property type="project" value="TreeGrafter"/>
</dbReference>
<dbReference type="GO" id="GO:0019843">
    <property type="term" value="F:rRNA binding"/>
    <property type="evidence" value="ECO:0007669"/>
    <property type="project" value="UniProtKB-UniRule"/>
</dbReference>
<dbReference type="GO" id="GO:0003735">
    <property type="term" value="F:structural constituent of ribosome"/>
    <property type="evidence" value="ECO:0007669"/>
    <property type="project" value="InterPro"/>
</dbReference>
<dbReference type="GO" id="GO:0006412">
    <property type="term" value="P:translation"/>
    <property type="evidence" value="ECO:0007669"/>
    <property type="project" value="UniProtKB-UniRule"/>
</dbReference>
<dbReference type="Gene3D" id="3.30.1430.10">
    <property type="match status" value="1"/>
</dbReference>
<dbReference type="Gene3D" id="4.10.960.10">
    <property type="entry name" value="Ribosomal protein L3, domain 3"/>
    <property type="match status" value="1"/>
</dbReference>
<dbReference type="Gene3D" id="2.40.30.10">
    <property type="entry name" value="Translation factors"/>
    <property type="match status" value="1"/>
</dbReference>
<dbReference type="HAMAP" id="MF_01325_A">
    <property type="entry name" value="Ribosomal_uL3_A"/>
    <property type="match status" value="1"/>
</dbReference>
<dbReference type="InterPro" id="IPR045077">
    <property type="entry name" value="L3_arc_euk"/>
</dbReference>
<dbReference type="InterPro" id="IPR044892">
    <property type="entry name" value="Ribosomal_L3_dom_3_arc_sf"/>
</dbReference>
<dbReference type="InterPro" id="IPR000597">
    <property type="entry name" value="Ribosomal_uL3"/>
</dbReference>
<dbReference type="InterPro" id="IPR019928">
    <property type="entry name" value="Ribosomal_uL3_arc"/>
</dbReference>
<dbReference type="InterPro" id="IPR019926">
    <property type="entry name" value="Ribosomal_uL3_CS"/>
</dbReference>
<dbReference type="InterPro" id="IPR009000">
    <property type="entry name" value="Transl_B-barrel_sf"/>
</dbReference>
<dbReference type="NCBIfam" id="TIGR03626">
    <property type="entry name" value="L3_arch"/>
    <property type="match status" value="1"/>
</dbReference>
<dbReference type="NCBIfam" id="NF003261">
    <property type="entry name" value="PRK04231.1"/>
    <property type="match status" value="1"/>
</dbReference>
<dbReference type="PANTHER" id="PTHR11363">
    <property type="entry name" value="60S RIBOSOMAL PROTEIN L3-RELATED"/>
    <property type="match status" value="1"/>
</dbReference>
<dbReference type="PANTHER" id="PTHR11363:SF5">
    <property type="entry name" value="LARGE RIBOSOMAL SUBUNIT PROTEIN UL3"/>
    <property type="match status" value="1"/>
</dbReference>
<dbReference type="Pfam" id="PF00297">
    <property type="entry name" value="Ribosomal_L3"/>
    <property type="match status" value="1"/>
</dbReference>
<dbReference type="SUPFAM" id="SSF50447">
    <property type="entry name" value="Translation proteins"/>
    <property type="match status" value="1"/>
</dbReference>
<dbReference type="PROSITE" id="PS00474">
    <property type="entry name" value="RIBOSOMAL_L3"/>
    <property type="match status" value="1"/>
</dbReference>
<evidence type="ECO:0000255" key="1">
    <source>
        <dbReference type="HAMAP-Rule" id="MF_01325"/>
    </source>
</evidence>
<evidence type="ECO:0000256" key="2">
    <source>
        <dbReference type="SAM" id="MobiDB-lite"/>
    </source>
</evidence>
<evidence type="ECO:0000305" key="3"/>